<organism>
    <name type="scientific">Arabidopsis thaliana</name>
    <name type="common">Mouse-ear cress</name>
    <dbReference type="NCBI Taxonomy" id="3702"/>
    <lineage>
        <taxon>Eukaryota</taxon>
        <taxon>Viridiplantae</taxon>
        <taxon>Streptophyta</taxon>
        <taxon>Embryophyta</taxon>
        <taxon>Tracheophyta</taxon>
        <taxon>Spermatophyta</taxon>
        <taxon>Magnoliopsida</taxon>
        <taxon>eudicotyledons</taxon>
        <taxon>Gunneridae</taxon>
        <taxon>Pentapetalae</taxon>
        <taxon>rosids</taxon>
        <taxon>malvids</taxon>
        <taxon>Brassicales</taxon>
        <taxon>Brassicaceae</taxon>
        <taxon>Camelineae</taxon>
        <taxon>Arabidopsis</taxon>
    </lineage>
</organism>
<dbReference type="EC" id="2.1.1.33" evidence="1"/>
<dbReference type="EMBL" id="AF069716">
    <property type="status" value="NOT_ANNOTATED_CDS"/>
    <property type="molecule type" value="Genomic_DNA"/>
</dbReference>
<dbReference type="EMBL" id="CP002688">
    <property type="protein sequence ID" value="AED93368.1"/>
    <property type="molecule type" value="Genomic_DNA"/>
</dbReference>
<dbReference type="EMBL" id="AK118324">
    <property type="protein sequence ID" value="BAC42938.1"/>
    <property type="molecule type" value="mRNA"/>
</dbReference>
<dbReference type="EMBL" id="BT006128">
    <property type="protein sequence ID" value="AAP04113.1"/>
    <property type="molecule type" value="mRNA"/>
</dbReference>
<dbReference type="RefSeq" id="NP_197866.1">
    <property type="nucleotide sequence ID" value="NM_122393.3"/>
</dbReference>
<dbReference type="SMR" id="Q8GXB7"/>
<dbReference type="FunCoup" id="Q8GXB7">
    <property type="interactions" value="3384"/>
</dbReference>
<dbReference type="STRING" id="3702.Q8GXB7"/>
<dbReference type="iPTMnet" id="Q8GXB7"/>
<dbReference type="PaxDb" id="3702-AT5G24840.1"/>
<dbReference type="ProteomicsDB" id="245243"/>
<dbReference type="EnsemblPlants" id="AT5G24840.1">
    <property type="protein sequence ID" value="AT5G24840.1"/>
    <property type="gene ID" value="AT5G24840"/>
</dbReference>
<dbReference type="GeneID" id="832553"/>
<dbReference type="Gramene" id="AT5G24840.1">
    <property type="protein sequence ID" value="AT5G24840.1"/>
    <property type="gene ID" value="AT5G24840"/>
</dbReference>
<dbReference type="KEGG" id="ath:AT5G24840"/>
<dbReference type="Araport" id="AT5G24840"/>
<dbReference type="TAIR" id="AT5G24840">
    <property type="gene designation" value="TRM8A"/>
</dbReference>
<dbReference type="eggNOG" id="KOG3115">
    <property type="taxonomic scope" value="Eukaryota"/>
</dbReference>
<dbReference type="HOGENOM" id="CLU_050910_3_0_1"/>
<dbReference type="InParanoid" id="Q8GXB7"/>
<dbReference type="OMA" id="LPNYFAK"/>
<dbReference type="PhylomeDB" id="Q8GXB7"/>
<dbReference type="UniPathway" id="UPA00989"/>
<dbReference type="CD-CODE" id="4299E36E">
    <property type="entry name" value="Nucleolus"/>
</dbReference>
<dbReference type="PRO" id="PR:Q8GXB7"/>
<dbReference type="Proteomes" id="UP000006548">
    <property type="component" value="Chromosome 5"/>
</dbReference>
<dbReference type="ExpressionAtlas" id="Q8GXB7">
    <property type="expression patterns" value="baseline and differential"/>
</dbReference>
<dbReference type="GO" id="GO:0005634">
    <property type="term" value="C:nucleus"/>
    <property type="evidence" value="ECO:0007669"/>
    <property type="project" value="UniProtKB-SubCell"/>
</dbReference>
<dbReference type="GO" id="GO:0008176">
    <property type="term" value="F:tRNA (guanine(46)-N7)-methyltransferase activity"/>
    <property type="evidence" value="ECO:0000250"/>
    <property type="project" value="UniProtKB"/>
</dbReference>
<dbReference type="GO" id="GO:0000049">
    <property type="term" value="F:tRNA binding"/>
    <property type="evidence" value="ECO:0007669"/>
    <property type="project" value="UniProtKB-UniRule"/>
</dbReference>
<dbReference type="GO" id="GO:0006400">
    <property type="term" value="P:tRNA modification"/>
    <property type="evidence" value="ECO:0000250"/>
    <property type="project" value="UniProtKB"/>
</dbReference>
<dbReference type="CDD" id="cd02440">
    <property type="entry name" value="AdoMet_MTases"/>
    <property type="match status" value="1"/>
</dbReference>
<dbReference type="FunFam" id="3.40.50.150:FF:000158">
    <property type="entry name" value="tRNA (guanine-N(7)-)-methyltransferase"/>
    <property type="match status" value="1"/>
</dbReference>
<dbReference type="Gene3D" id="3.40.50.150">
    <property type="entry name" value="Vaccinia Virus protein VP39"/>
    <property type="match status" value="1"/>
</dbReference>
<dbReference type="HAMAP" id="MF_03055">
    <property type="entry name" value="tRNA_methyltr_TrmB_euk"/>
    <property type="match status" value="1"/>
</dbReference>
<dbReference type="InterPro" id="IPR029063">
    <property type="entry name" value="SAM-dependent_MTases_sf"/>
</dbReference>
<dbReference type="InterPro" id="IPR025763">
    <property type="entry name" value="Trm8_euk"/>
</dbReference>
<dbReference type="InterPro" id="IPR003358">
    <property type="entry name" value="tRNA_(Gua-N-7)_MeTrfase_Trmb"/>
</dbReference>
<dbReference type="NCBIfam" id="TIGR00091">
    <property type="entry name" value="tRNA (guanosine(46)-N7)-methyltransferase TrmB"/>
    <property type="match status" value="1"/>
</dbReference>
<dbReference type="PANTHER" id="PTHR23417">
    <property type="entry name" value="3-DEOXY-D-MANNO-OCTULOSONIC-ACID TRANSFERASE/TRNA GUANINE-N 7 - -METHYLTRANSFERASE"/>
    <property type="match status" value="1"/>
</dbReference>
<dbReference type="PANTHER" id="PTHR23417:SF16">
    <property type="entry name" value="TRNA (GUANINE-N(7)-)-METHYLTRANSFERASE"/>
    <property type="match status" value="1"/>
</dbReference>
<dbReference type="Pfam" id="PF02390">
    <property type="entry name" value="Methyltransf_4"/>
    <property type="match status" value="1"/>
</dbReference>
<dbReference type="SUPFAM" id="SSF53335">
    <property type="entry name" value="S-adenosyl-L-methionine-dependent methyltransferases"/>
    <property type="match status" value="1"/>
</dbReference>
<dbReference type="PROSITE" id="PS51625">
    <property type="entry name" value="SAM_MT_TRMB"/>
    <property type="match status" value="1"/>
</dbReference>
<reference key="1">
    <citation type="journal article" date="2000" name="Nature">
        <title>Sequence and analysis of chromosome 5 of the plant Arabidopsis thaliana.</title>
        <authorList>
            <person name="Tabata S."/>
            <person name="Kaneko T."/>
            <person name="Nakamura Y."/>
            <person name="Kotani H."/>
            <person name="Kato T."/>
            <person name="Asamizu E."/>
            <person name="Miyajima N."/>
            <person name="Sasamoto S."/>
            <person name="Kimura T."/>
            <person name="Hosouchi T."/>
            <person name="Kawashima K."/>
            <person name="Kohara M."/>
            <person name="Matsumoto M."/>
            <person name="Matsuno A."/>
            <person name="Muraki A."/>
            <person name="Nakayama S."/>
            <person name="Nakazaki N."/>
            <person name="Naruo K."/>
            <person name="Okumura S."/>
            <person name="Shinpo S."/>
            <person name="Takeuchi C."/>
            <person name="Wada T."/>
            <person name="Watanabe A."/>
            <person name="Yamada M."/>
            <person name="Yasuda M."/>
            <person name="Sato S."/>
            <person name="de la Bastide M."/>
            <person name="Huang E."/>
            <person name="Spiegel L."/>
            <person name="Gnoj L."/>
            <person name="O'Shaughnessy A."/>
            <person name="Preston R."/>
            <person name="Habermann K."/>
            <person name="Murray J."/>
            <person name="Johnson D."/>
            <person name="Rohlfing T."/>
            <person name="Nelson J."/>
            <person name="Stoneking T."/>
            <person name="Pepin K."/>
            <person name="Spieth J."/>
            <person name="Sekhon M."/>
            <person name="Armstrong J."/>
            <person name="Becker M."/>
            <person name="Belter E."/>
            <person name="Cordum H."/>
            <person name="Cordes M."/>
            <person name="Courtney L."/>
            <person name="Courtney W."/>
            <person name="Dante M."/>
            <person name="Du H."/>
            <person name="Edwards J."/>
            <person name="Fryman J."/>
            <person name="Haakensen B."/>
            <person name="Lamar E."/>
            <person name="Latreille P."/>
            <person name="Leonard S."/>
            <person name="Meyer R."/>
            <person name="Mulvaney E."/>
            <person name="Ozersky P."/>
            <person name="Riley A."/>
            <person name="Strowmatt C."/>
            <person name="Wagner-McPherson C."/>
            <person name="Wollam A."/>
            <person name="Yoakum M."/>
            <person name="Bell M."/>
            <person name="Dedhia N."/>
            <person name="Parnell L."/>
            <person name="Shah R."/>
            <person name="Rodriguez M."/>
            <person name="Hoon See L."/>
            <person name="Vil D."/>
            <person name="Baker J."/>
            <person name="Kirchoff K."/>
            <person name="Toth K."/>
            <person name="King L."/>
            <person name="Bahret A."/>
            <person name="Miller B."/>
            <person name="Marra M.A."/>
            <person name="Martienssen R."/>
            <person name="McCombie W.R."/>
            <person name="Wilson R.K."/>
            <person name="Murphy G."/>
            <person name="Bancroft I."/>
            <person name="Volckaert G."/>
            <person name="Wambutt R."/>
            <person name="Duesterhoeft A."/>
            <person name="Stiekema W."/>
            <person name="Pohl T."/>
            <person name="Entian K.-D."/>
            <person name="Terryn N."/>
            <person name="Hartley N."/>
            <person name="Bent E."/>
            <person name="Johnson S."/>
            <person name="Langham S.-A."/>
            <person name="McCullagh B."/>
            <person name="Robben J."/>
            <person name="Grymonprez B."/>
            <person name="Zimmermann W."/>
            <person name="Ramsperger U."/>
            <person name="Wedler H."/>
            <person name="Balke K."/>
            <person name="Wedler E."/>
            <person name="Peters S."/>
            <person name="van Staveren M."/>
            <person name="Dirkse W."/>
            <person name="Mooijman P."/>
            <person name="Klein Lankhorst R."/>
            <person name="Weitzenegger T."/>
            <person name="Bothe G."/>
            <person name="Rose M."/>
            <person name="Hauf J."/>
            <person name="Berneiser S."/>
            <person name="Hempel S."/>
            <person name="Feldpausch M."/>
            <person name="Lamberth S."/>
            <person name="Villarroel R."/>
            <person name="Gielen J."/>
            <person name="Ardiles W."/>
            <person name="Bents O."/>
            <person name="Lemcke K."/>
            <person name="Kolesov G."/>
            <person name="Mayer K.F.X."/>
            <person name="Rudd S."/>
            <person name="Schoof H."/>
            <person name="Schueller C."/>
            <person name="Zaccaria P."/>
            <person name="Mewes H.-W."/>
            <person name="Bevan M."/>
            <person name="Fransz P.F."/>
        </authorList>
    </citation>
    <scope>NUCLEOTIDE SEQUENCE [LARGE SCALE GENOMIC DNA]</scope>
    <source>
        <strain>cv. Columbia</strain>
    </source>
</reference>
<reference key="2">
    <citation type="journal article" date="2017" name="Plant J.">
        <title>Araport11: a complete reannotation of the Arabidopsis thaliana reference genome.</title>
        <authorList>
            <person name="Cheng C.Y."/>
            <person name="Krishnakumar V."/>
            <person name="Chan A.P."/>
            <person name="Thibaud-Nissen F."/>
            <person name="Schobel S."/>
            <person name="Town C.D."/>
        </authorList>
    </citation>
    <scope>GENOME REANNOTATION</scope>
    <source>
        <strain>cv. Columbia</strain>
    </source>
</reference>
<reference key="3">
    <citation type="journal article" date="2002" name="Science">
        <title>Functional annotation of a full-length Arabidopsis cDNA collection.</title>
        <authorList>
            <person name="Seki M."/>
            <person name="Narusaka M."/>
            <person name="Kamiya A."/>
            <person name="Ishida J."/>
            <person name="Satou M."/>
            <person name="Sakurai T."/>
            <person name="Nakajima M."/>
            <person name="Enju A."/>
            <person name="Akiyama K."/>
            <person name="Oono Y."/>
            <person name="Muramatsu M."/>
            <person name="Hayashizaki Y."/>
            <person name="Kawai J."/>
            <person name="Carninci P."/>
            <person name="Itoh M."/>
            <person name="Ishii Y."/>
            <person name="Arakawa T."/>
            <person name="Shibata K."/>
            <person name="Shinagawa A."/>
            <person name="Shinozaki K."/>
        </authorList>
    </citation>
    <scope>NUCLEOTIDE SEQUENCE [LARGE SCALE MRNA]</scope>
    <source>
        <strain>cv. Columbia</strain>
    </source>
</reference>
<reference key="4">
    <citation type="journal article" date="2003" name="Science">
        <title>Empirical analysis of transcriptional activity in the Arabidopsis genome.</title>
        <authorList>
            <person name="Yamada K."/>
            <person name="Lim J."/>
            <person name="Dale J.M."/>
            <person name="Chen H."/>
            <person name="Shinn P."/>
            <person name="Palm C.J."/>
            <person name="Southwick A.M."/>
            <person name="Wu H.C."/>
            <person name="Kim C.J."/>
            <person name="Nguyen M."/>
            <person name="Pham P.K."/>
            <person name="Cheuk R.F."/>
            <person name="Karlin-Newmann G."/>
            <person name="Liu S.X."/>
            <person name="Lam B."/>
            <person name="Sakano H."/>
            <person name="Wu T."/>
            <person name="Yu G."/>
            <person name="Miranda M."/>
            <person name="Quach H.L."/>
            <person name="Tripp M."/>
            <person name="Chang C.H."/>
            <person name="Lee J.M."/>
            <person name="Toriumi M.J."/>
            <person name="Chan M.M."/>
            <person name="Tang C.C."/>
            <person name="Onodera C.S."/>
            <person name="Deng J.M."/>
            <person name="Akiyama K."/>
            <person name="Ansari Y."/>
            <person name="Arakawa T."/>
            <person name="Banh J."/>
            <person name="Banno F."/>
            <person name="Bowser L."/>
            <person name="Brooks S.Y."/>
            <person name="Carninci P."/>
            <person name="Chao Q."/>
            <person name="Choy N."/>
            <person name="Enju A."/>
            <person name="Goldsmith A.D."/>
            <person name="Gurjal M."/>
            <person name="Hansen N.F."/>
            <person name="Hayashizaki Y."/>
            <person name="Johnson-Hopson C."/>
            <person name="Hsuan V.W."/>
            <person name="Iida K."/>
            <person name="Karnes M."/>
            <person name="Khan S."/>
            <person name="Koesema E."/>
            <person name="Ishida J."/>
            <person name="Jiang P.X."/>
            <person name="Jones T."/>
            <person name="Kawai J."/>
            <person name="Kamiya A."/>
            <person name="Meyers C."/>
            <person name="Nakajima M."/>
            <person name="Narusaka M."/>
            <person name="Seki M."/>
            <person name="Sakurai T."/>
            <person name="Satou M."/>
            <person name="Tamse R."/>
            <person name="Vaysberg M."/>
            <person name="Wallender E.K."/>
            <person name="Wong C."/>
            <person name="Yamamura Y."/>
            <person name="Yuan S."/>
            <person name="Shinozaki K."/>
            <person name="Davis R.W."/>
            <person name="Theologis A."/>
            <person name="Ecker J.R."/>
        </authorList>
    </citation>
    <scope>NUCLEOTIDE SEQUENCE [LARGE SCALE MRNA]</scope>
    <source>
        <strain>cv. Columbia</strain>
    </source>
</reference>
<proteinExistence type="evidence at transcript level"/>
<comment type="function">
    <text evidence="1">Catalyzes the formation of N(7)-methylguanine at position 46 (m7G46) in tRNA.</text>
</comment>
<comment type="catalytic activity">
    <reaction evidence="1">
        <text>guanosine(46) in tRNA + S-adenosyl-L-methionine = N(7)-methylguanosine(46) in tRNA + S-adenosyl-L-homocysteine</text>
        <dbReference type="Rhea" id="RHEA:42708"/>
        <dbReference type="Rhea" id="RHEA-COMP:10188"/>
        <dbReference type="Rhea" id="RHEA-COMP:10189"/>
        <dbReference type="ChEBI" id="CHEBI:57856"/>
        <dbReference type="ChEBI" id="CHEBI:59789"/>
        <dbReference type="ChEBI" id="CHEBI:74269"/>
        <dbReference type="ChEBI" id="CHEBI:74480"/>
        <dbReference type="EC" id="2.1.1.33"/>
    </reaction>
</comment>
<comment type="pathway">
    <text evidence="1">tRNA modification; N(7)-methylguanine-tRNA biosynthesis.</text>
</comment>
<comment type="subcellular location">
    <subcellularLocation>
        <location evidence="1">Nucleus</location>
    </subcellularLocation>
</comment>
<comment type="similarity">
    <text evidence="1">Belongs to the class I-like SAM-binding methyltransferase superfamily. TrmB family.</text>
</comment>
<evidence type="ECO:0000255" key="1">
    <source>
        <dbReference type="HAMAP-Rule" id="MF_03055"/>
    </source>
</evidence>
<protein>
    <recommendedName>
        <fullName evidence="1">tRNA (guanine-N(7)-)-methyltransferase</fullName>
        <ecNumber evidence="1">2.1.1.33</ecNumber>
    </recommendedName>
    <alternativeName>
        <fullName evidence="1">tRNA (guanine(46)-N(7))-methyltransferase</fullName>
    </alternativeName>
    <alternativeName>
        <fullName evidence="1">tRNA(m7G46)-methyltransferase</fullName>
    </alternativeName>
</protein>
<sequence>MDNETKATTFSKSTGLPRKRFYRARAHSNPLSDSHFPIPISPAHVDYSLHFPKFVEADNKFIKKVEFADIGCGFGGLLISLATLFPDTLMIGMELRDKVTEYVKERILALRRTSSEGQYENISVVRTNSMKYIPNYFEKGQLSKMFFLFPDPHFKEKNHRRRVISTHLLDEYAYVLRAGGIIYTITDVEELGEWMKSCLEKHPMFESLTQEELVSDPVVELLCSATEEGQKVARNGGQTFRAVFRRIAYVS</sequence>
<feature type="chain" id="PRO_0000171435" description="tRNA (guanine-N(7)-)-methyltransferase">
    <location>
        <begin position="1"/>
        <end position="251"/>
    </location>
</feature>
<feature type="active site" evidence="1">
    <location>
        <position position="151"/>
    </location>
</feature>
<feature type="binding site" evidence="1">
    <location>
        <position position="71"/>
    </location>
    <ligand>
        <name>S-adenosyl-L-methionine</name>
        <dbReference type="ChEBI" id="CHEBI:59789"/>
    </ligand>
</feature>
<feature type="binding site" evidence="1">
    <location>
        <begin position="94"/>
        <end position="95"/>
    </location>
    <ligand>
        <name>S-adenosyl-L-methionine</name>
        <dbReference type="ChEBI" id="CHEBI:59789"/>
    </ligand>
</feature>
<feature type="binding site" evidence="1">
    <location>
        <begin position="128"/>
        <end position="129"/>
    </location>
    <ligand>
        <name>S-adenosyl-L-methionine</name>
        <dbReference type="ChEBI" id="CHEBI:59789"/>
    </ligand>
</feature>
<feature type="binding site" evidence="1">
    <location>
        <position position="148"/>
    </location>
    <ligand>
        <name>S-adenosyl-L-methionine</name>
        <dbReference type="ChEBI" id="CHEBI:59789"/>
    </ligand>
</feature>
<feature type="binding site" evidence="1">
    <location>
        <begin position="226"/>
        <end position="228"/>
    </location>
    <ligand>
        <name>S-adenosyl-L-methionine</name>
        <dbReference type="ChEBI" id="CHEBI:59789"/>
    </ligand>
</feature>
<gene>
    <name type="ordered locus">At5g24840</name>
    <name type="ORF">F6A4_50</name>
</gene>
<keyword id="KW-0489">Methyltransferase</keyword>
<keyword id="KW-0539">Nucleus</keyword>
<keyword id="KW-1185">Reference proteome</keyword>
<keyword id="KW-0694">RNA-binding</keyword>
<keyword id="KW-0949">S-adenosyl-L-methionine</keyword>
<keyword id="KW-0808">Transferase</keyword>
<keyword id="KW-0819">tRNA processing</keyword>
<keyword id="KW-0820">tRNA-binding</keyword>
<accession>Q8GXB7</accession>
<name>TRMB_ARATH</name>